<name>KAD_SHEDO</name>
<accession>Q12PB0</accession>
<comment type="function">
    <text evidence="1">Catalyzes the reversible transfer of the terminal phosphate group between ATP and AMP. Plays an important role in cellular energy homeostasis and in adenine nucleotide metabolism.</text>
</comment>
<comment type="catalytic activity">
    <reaction evidence="1">
        <text>AMP + ATP = 2 ADP</text>
        <dbReference type="Rhea" id="RHEA:12973"/>
        <dbReference type="ChEBI" id="CHEBI:30616"/>
        <dbReference type="ChEBI" id="CHEBI:456215"/>
        <dbReference type="ChEBI" id="CHEBI:456216"/>
        <dbReference type="EC" id="2.7.4.3"/>
    </reaction>
</comment>
<comment type="pathway">
    <text evidence="1">Purine metabolism; AMP biosynthesis via salvage pathway; AMP from ADP: step 1/1.</text>
</comment>
<comment type="subunit">
    <text evidence="1">Monomer.</text>
</comment>
<comment type="subcellular location">
    <subcellularLocation>
        <location evidence="1">Cytoplasm</location>
    </subcellularLocation>
</comment>
<comment type="domain">
    <text evidence="1">Consists of three domains, a large central CORE domain and two small peripheral domains, NMPbind and LID, which undergo movements during catalysis. The LID domain closes over the site of phosphoryl transfer upon ATP binding. Assembling and dissambling the active center during each catalytic cycle provides an effective means to prevent ATP hydrolysis.</text>
</comment>
<comment type="similarity">
    <text evidence="1">Belongs to the adenylate kinase family.</text>
</comment>
<proteinExistence type="inferred from homology"/>
<reference key="1">
    <citation type="submission" date="2006-03" db="EMBL/GenBank/DDBJ databases">
        <title>Complete sequence of Shewanella denitrificans OS217.</title>
        <authorList>
            <consortium name="US DOE Joint Genome Institute"/>
            <person name="Copeland A."/>
            <person name="Lucas S."/>
            <person name="Lapidus A."/>
            <person name="Barry K."/>
            <person name="Detter J.C."/>
            <person name="Glavina del Rio T."/>
            <person name="Hammon N."/>
            <person name="Israni S."/>
            <person name="Dalin E."/>
            <person name="Tice H."/>
            <person name="Pitluck S."/>
            <person name="Brettin T."/>
            <person name="Bruce D."/>
            <person name="Han C."/>
            <person name="Tapia R."/>
            <person name="Gilna P."/>
            <person name="Kiss H."/>
            <person name="Schmutz J."/>
            <person name="Larimer F."/>
            <person name="Land M."/>
            <person name="Hauser L."/>
            <person name="Kyrpides N."/>
            <person name="Lykidis A."/>
            <person name="Richardson P."/>
        </authorList>
    </citation>
    <scope>NUCLEOTIDE SEQUENCE [LARGE SCALE GENOMIC DNA]</scope>
    <source>
        <strain>OS217 / ATCC BAA-1090 / DSM 15013</strain>
    </source>
</reference>
<evidence type="ECO:0000255" key="1">
    <source>
        <dbReference type="HAMAP-Rule" id="MF_00235"/>
    </source>
</evidence>
<organism>
    <name type="scientific">Shewanella denitrificans (strain OS217 / ATCC BAA-1090 / DSM 15013)</name>
    <dbReference type="NCBI Taxonomy" id="318161"/>
    <lineage>
        <taxon>Bacteria</taxon>
        <taxon>Pseudomonadati</taxon>
        <taxon>Pseudomonadota</taxon>
        <taxon>Gammaproteobacteria</taxon>
        <taxon>Alteromonadales</taxon>
        <taxon>Shewanellaceae</taxon>
        <taxon>Shewanella</taxon>
    </lineage>
</organism>
<feature type="chain" id="PRO_1000058896" description="Adenylate kinase">
    <location>
        <begin position="1"/>
        <end position="214"/>
    </location>
</feature>
<feature type="region of interest" description="NMP" evidence="1">
    <location>
        <begin position="30"/>
        <end position="59"/>
    </location>
</feature>
<feature type="region of interest" description="LID" evidence="1">
    <location>
        <begin position="122"/>
        <end position="159"/>
    </location>
</feature>
<feature type="binding site" evidence="1">
    <location>
        <begin position="10"/>
        <end position="15"/>
    </location>
    <ligand>
        <name>ATP</name>
        <dbReference type="ChEBI" id="CHEBI:30616"/>
    </ligand>
</feature>
<feature type="binding site" evidence="1">
    <location>
        <position position="31"/>
    </location>
    <ligand>
        <name>AMP</name>
        <dbReference type="ChEBI" id="CHEBI:456215"/>
    </ligand>
</feature>
<feature type="binding site" evidence="1">
    <location>
        <position position="36"/>
    </location>
    <ligand>
        <name>AMP</name>
        <dbReference type="ChEBI" id="CHEBI:456215"/>
    </ligand>
</feature>
<feature type="binding site" evidence="1">
    <location>
        <begin position="57"/>
        <end position="59"/>
    </location>
    <ligand>
        <name>AMP</name>
        <dbReference type="ChEBI" id="CHEBI:456215"/>
    </ligand>
</feature>
<feature type="binding site" evidence="1">
    <location>
        <begin position="85"/>
        <end position="88"/>
    </location>
    <ligand>
        <name>AMP</name>
        <dbReference type="ChEBI" id="CHEBI:456215"/>
    </ligand>
</feature>
<feature type="binding site" evidence="1">
    <location>
        <position position="92"/>
    </location>
    <ligand>
        <name>AMP</name>
        <dbReference type="ChEBI" id="CHEBI:456215"/>
    </ligand>
</feature>
<feature type="binding site" evidence="1">
    <location>
        <position position="123"/>
    </location>
    <ligand>
        <name>ATP</name>
        <dbReference type="ChEBI" id="CHEBI:30616"/>
    </ligand>
</feature>
<feature type="binding site" evidence="1">
    <location>
        <begin position="132"/>
        <end position="133"/>
    </location>
    <ligand>
        <name>ATP</name>
        <dbReference type="ChEBI" id="CHEBI:30616"/>
    </ligand>
</feature>
<feature type="binding site" evidence="1">
    <location>
        <position position="156"/>
    </location>
    <ligand>
        <name>AMP</name>
        <dbReference type="ChEBI" id="CHEBI:456215"/>
    </ligand>
</feature>
<feature type="binding site" evidence="1">
    <location>
        <position position="167"/>
    </location>
    <ligand>
        <name>AMP</name>
        <dbReference type="ChEBI" id="CHEBI:456215"/>
    </ligand>
</feature>
<feature type="binding site" evidence="1">
    <location>
        <position position="200"/>
    </location>
    <ligand>
        <name>ATP</name>
        <dbReference type="ChEBI" id="CHEBI:30616"/>
    </ligand>
</feature>
<gene>
    <name evidence="1" type="primary">adk</name>
    <name type="ordered locus">Sden_1430</name>
</gene>
<protein>
    <recommendedName>
        <fullName evidence="1">Adenylate kinase</fullName>
        <shortName evidence="1">AK</shortName>
        <ecNumber evidence="1">2.7.4.3</ecNumber>
    </recommendedName>
    <alternativeName>
        <fullName evidence="1">ATP-AMP transphosphorylase</fullName>
    </alternativeName>
    <alternativeName>
        <fullName evidence="1">ATP:AMP phosphotransferase</fullName>
    </alternativeName>
    <alternativeName>
        <fullName evidence="1">Adenylate monophosphate kinase</fullName>
    </alternativeName>
</protein>
<sequence length="214" mass="23261">MRIILLGAPGAGKGTQAQFIMQQYGIPQISTGDMLRAAVKAGTPLGLEAKKVMDAGQLVSDELIIGLVKERIAQDDCVKGFLLDGFPRTIPQADAMAANGIEIDHVIEIDVPDEEIVKRMSGRRVHSGSGRVYHVVFNPPKVEGKDDVTGEDLSIRPDDEESTVRKRLDIYHEQTKPLVEYYGNVAAQGKTQYNKFDGTQSVAAVSEQLAKVIG</sequence>
<keyword id="KW-0067">ATP-binding</keyword>
<keyword id="KW-0963">Cytoplasm</keyword>
<keyword id="KW-0418">Kinase</keyword>
<keyword id="KW-0545">Nucleotide biosynthesis</keyword>
<keyword id="KW-0547">Nucleotide-binding</keyword>
<keyword id="KW-1185">Reference proteome</keyword>
<keyword id="KW-0808">Transferase</keyword>
<dbReference type="EC" id="2.7.4.3" evidence="1"/>
<dbReference type="EMBL" id="CP000302">
    <property type="protein sequence ID" value="ABE54716.1"/>
    <property type="molecule type" value="Genomic_DNA"/>
</dbReference>
<dbReference type="RefSeq" id="WP_011495874.1">
    <property type="nucleotide sequence ID" value="NC_007954.1"/>
</dbReference>
<dbReference type="SMR" id="Q12PB0"/>
<dbReference type="STRING" id="318161.Sden_1430"/>
<dbReference type="KEGG" id="sdn:Sden_1430"/>
<dbReference type="eggNOG" id="COG0563">
    <property type="taxonomic scope" value="Bacteria"/>
</dbReference>
<dbReference type="HOGENOM" id="CLU_032354_1_2_6"/>
<dbReference type="OrthoDB" id="9805030at2"/>
<dbReference type="UniPathway" id="UPA00588">
    <property type="reaction ID" value="UER00649"/>
</dbReference>
<dbReference type="Proteomes" id="UP000001982">
    <property type="component" value="Chromosome"/>
</dbReference>
<dbReference type="GO" id="GO:0005737">
    <property type="term" value="C:cytoplasm"/>
    <property type="evidence" value="ECO:0007669"/>
    <property type="project" value="UniProtKB-SubCell"/>
</dbReference>
<dbReference type="GO" id="GO:0004017">
    <property type="term" value="F:adenylate kinase activity"/>
    <property type="evidence" value="ECO:0007669"/>
    <property type="project" value="UniProtKB-UniRule"/>
</dbReference>
<dbReference type="GO" id="GO:0005524">
    <property type="term" value="F:ATP binding"/>
    <property type="evidence" value="ECO:0007669"/>
    <property type="project" value="UniProtKB-UniRule"/>
</dbReference>
<dbReference type="GO" id="GO:0044209">
    <property type="term" value="P:AMP salvage"/>
    <property type="evidence" value="ECO:0007669"/>
    <property type="project" value="UniProtKB-UniRule"/>
</dbReference>
<dbReference type="CDD" id="cd01428">
    <property type="entry name" value="ADK"/>
    <property type="match status" value="1"/>
</dbReference>
<dbReference type="FunFam" id="3.40.50.300:FF:000106">
    <property type="entry name" value="Adenylate kinase mitochondrial"/>
    <property type="match status" value="1"/>
</dbReference>
<dbReference type="Gene3D" id="3.40.50.300">
    <property type="entry name" value="P-loop containing nucleotide triphosphate hydrolases"/>
    <property type="match status" value="1"/>
</dbReference>
<dbReference type="HAMAP" id="MF_00235">
    <property type="entry name" value="Adenylate_kinase_Adk"/>
    <property type="match status" value="1"/>
</dbReference>
<dbReference type="InterPro" id="IPR006259">
    <property type="entry name" value="Adenyl_kin_sub"/>
</dbReference>
<dbReference type="InterPro" id="IPR000850">
    <property type="entry name" value="Adenylat/UMP-CMP_kin"/>
</dbReference>
<dbReference type="InterPro" id="IPR033690">
    <property type="entry name" value="Adenylat_kinase_CS"/>
</dbReference>
<dbReference type="InterPro" id="IPR007862">
    <property type="entry name" value="Adenylate_kinase_lid-dom"/>
</dbReference>
<dbReference type="InterPro" id="IPR027417">
    <property type="entry name" value="P-loop_NTPase"/>
</dbReference>
<dbReference type="NCBIfam" id="TIGR01351">
    <property type="entry name" value="adk"/>
    <property type="match status" value="1"/>
</dbReference>
<dbReference type="NCBIfam" id="NF001379">
    <property type="entry name" value="PRK00279.1-1"/>
    <property type="match status" value="1"/>
</dbReference>
<dbReference type="NCBIfam" id="NF001380">
    <property type="entry name" value="PRK00279.1-2"/>
    <property type="match status" value="1"/>
</dbReference>
<dbReference type="NCBIfam" id="NF001381">
    <property type="entry name" value="PRK00279.1-3"/>
    <property type="match status" value="1"/>
</dbReference>
<dbReference type="NCBIfam" id="NF011100">
    <property type="entry name" value="PRK14527.1"/>
    <property type="match status" value="1"/>
</dbReference>
<dbReference type="PANTHER" id="PTHR23359">
    <property type="entry name" value="NUCLEOTIDE KINASE"/>
    <property type="match status" value="1"/>
</dbReference>
<dbReference type="Pfam" id="PF00406">
    <property type="entry name" value="ADK"/>
    <property type="match status" value="1"/>
</dbReference>
<dbReference type="Pfam" id="PF05191">
    <property type="entry name" value="ADK_lid"/>
    <property type="match status" value="1"/>
</dbReference>
<dbReference type="PRINTS" id="PR00094">
    <property type="entry name" value="ADENYLTKNASE"/>
</dbReference>
<dbReference type="SUPFAM" id="SSF52540">
    <property type="entry name" value="P-loop containing nucleoside triphosphate hydrolases"/>
    <property type="match status" value="1"/>
</dbReference>
<dbReference type="PROSITE" id="PS00113">
    <property type="entry name" value="ADENYLATE_KINASE"/>
    <property type="match status" value="1"/>
</dbReference>